<comment type="function">
    <text evidence="5">Involved in iodate respiration (PubMed:34215855). May play a critical role in detoxification of inadvertent H(2)O(2) generated by the iodate reductase IdrA/IdrB (PubMed:34215855).</text>
</comment>
<comment type="catalytic activity">
    <reaction evidence="8">
        <text>2 Fe(II)-[cytochrome c] + H2O2 + 2 H(+) = 2 Fe(III)-[cytochrome c] + 2 H2O</text>
        <dbReference type="Rhea" id="RHEA:16581"/>
        <dbReference type="Rhea" id="RHEA-COMP:10350"/>
        <dbReference type="Rhea" id="RHEA-COMP:14399"/>
        <dbReference type="ChEBI" id="CHEBI:15377"/>
        <dbReference type="ChEBI" id="CHEBI:15378"/>
        <dbReference type="ChEBI" id="CHEBI:16240"/>
        <dbReference type="ChEBI" id="CHEBI:29033"/>
        <dbReference type="ChEBI" id="CHEBI:29034"/>
        <dbReference type="EC" id="1.11.1.5"/>
    </reaction>
</comment>
<comment type="cofactor">
    <cofactor evidence="2">
        <name>heme c</name>
        <dbReference type="ChEBI" id="CHEBI:61717"/>
    </cofactor>
    <text evidence="2">Binds 2 heme c groups.</text>
</comment>
<comment type="subunit">
    <text evidence="8">The iodate reductase (Idr) complex is composed of a molybdopterin-dependent iodate reductase (IdrA and IdrB subunits) and two associated peroxidases (IdrP1 and IdrP2).</text>
</comment>
<comment type="subcellular location">
    <subcellularLocation>
        <location evidence="1">Periplasm</location>
    </subcellularLocation>
</comment>
<feature type="signal peptide" evidence="3">
    <location>
        <begin position="1"/>
        <end position="28"/>
    </location>
</feature>
<feature type="chain" id="PRO_0000455409" description="Cytochrome-c peroxidase IdrP2" evidence="3">
    <location>
        <begin position="29"/>
        <end position="367"/>
    </location>
</feature>
<feature type="domain" description="Cytochrome c 1" evidence="4">
    <location>
        <begin position="47"/>
        <end position="157"/>
    </location>
</feature>
<feature type="domain" description="Cytochrome c 2" evidence="4">
    <location>
        <begin position="200"/>
        <end position="345"/>
    </location>
</feature>
<feature type="binding site" description="covalent" evidence="4">
    <location>
        <position position="69"/>
    </location>
    <ligand>
        <name>heme c</name>
        <dbReference type="ChEBI" id="CHEBI:61717"/>
        <label>1</label>
    </ligand>
</feature>
<feature type="binding site" description="covalent" evidence="4">
    <location>
        <position position="72"/>
    </location>
    <ligand>
        <name>heme c</name>
        <dbReference type="ChEBI" id="CHEBI:61717"/>
        <label>1</label>
    </ligand>
</feature>
<feature type="binding site" description="axial binding residue" evidence="4">
    <location>
        <position position="73"/>
    </location>
    <ligand>
        <name>heme c</name>
        <dbReference type="ChEBI" id="CHEBI:61717"/>
        <label>1</label>
    </ligand>
    <ligandPart>
        <name>Fe</name>
        <dbReference type="ChEBI" id="CHEBI:18248"/>
    </ligandPart>
</feature>
<feature type="binding site" description="covalent" evidence="4">
    <location>
        <position position="215"/>
    </location>
    <ligand>
        <name>heme c</name>
        <dbReference type="ChEBI" id="CHEBI:61717"/>
        <label>2</label>
    </ligand>
</feature>
<feature type="binding site" description="covalent" evidence="4">
    <location>
        <position position="218"/>
    </location>
    <ligand>
        <name>heme c</name>
        <dbReference type="ChEBI" id="CHEBI:61717"/>
        <label>2</label>
    </ligand>
</feature>
<feature type="binding site" description="axial binding residue" evidence="4">
    <location>
        <position position="219"/>
    </location>
    <ligand>
        <name>heme c</name>
        <dbReference type="ChEBI" id="CHEBI:61717"/>
        <label>2</label>
    </ligand>
    <ligandPart>
        <name>Fe</name>
        <dbReference type="ChEBI" id="CHEBI:18248"/>
    </ligandPart>
</feature>
<proteinExistence type="evidence at protein level"/>
<evidence type="ECO:0000250" key="1">
    <source>
        <dbReference type="UniProtKB" id="A0A391NKV7"/>
    </source>
</evidence>
<evidence type="ECO:0000250" key="2">
    <source>
        <dbReference type="UniProtKB" id="P14532"/>
    </source>
</evidence>
<evidence type="ECO:0000255" key="3"/>
<evidence type="ECO:0000255" key="4">
    <source>
        <dbReference type="PROSITE-ProRule" id="PRU00433"/>
    </source>
</evidence>
<evidence type="ECO:0000269" key="5">
    <source>
    </source>
</evidence>
<evidence type="ECO:0000303" key="6">
    <source>
    </source>
</evidence>
<evidence type="ECO:0000305" key="7"/>
<evidence type="ECO:0000305" key="8">
    <source>
    </source>
</evidence>
<evidence type="ECO:0000312" key="9">
    <source>
        <dbReference type="EMBL" id="MBT0960287.1"/>
    </source>
</evidence>
<organism>
    <name type="scientific">Denitromonas iodatirespirans</name>
    <dbReference type="NCBI Taxonomy" id="2795389"/>
    <lineage>
        <taxon>Bacteria</taxon>
        <taxon>Pseudomonadati</taxon>
        <taxon>Pseudomonadota</taxon>
        <taxon>Betaproteobacteria</taxon>
        <taxon>Rhodocyclales</taxon>
        <taxon>Zoogloeaceae</taxon>
        <taxon>Denitromonas</taxon>
    </lineage>
</organism>
<sequence length="367" mass="39941">MTTHQSIRRLSRIAALVGLAFVAGTVAAADGKAELQALPEAKAGNADMVELGKHLFFDTRLSGDMGVSCASCHDPAKGFSDGMPLSAGYPSVEYFRNAPTLINSRFKNVFMWDGRLDGADMGTLVRDMLTEAHTMNMDSRLMQERLSQVPEYVAMWQKFRKDDINGMRVYGVVGEYVKTLVSQNAPIDRFLKGDGSALTSQQKDGYEIFTGKGGCVACHNGPLGSDGQVHNTGVPENPEVLKNPNRTVTLLRHYATSGMPNYMNARTDLGHYAISKDPADMNKFATPSLRELKYTAPYMHNGMLTTLDQVVDFYNQGGGQGSELTPLGLSGSEKKALVAFLEALSGEPLNVVAPTLPDYQPRQFGKN</sequence>
<protein>
    <recommendedName>
        <fullName evidence="7">Cytochrome-c peroxidase IdrP2</fullName>
        <ecNumber evidence="8">1.11.1.5</ecNumber>
    </recommendedName>
    <alternativeName>
        <fullName evidence="7">Iodate reductase subunit IdrP2</fullName>
    </alternativeName>
</protein>
<dbReference type="EC" id="1.11.1.5" evidence="8"/>
<dbReference type="EMBL" id="JAEKFT010000003">
    <property type="protein sequence ID" value="MBT0960287.1"/>
    <property type="molecule type" value="Genomic_DNA"/>
</dbReference>
<dbReference type="RefSeq" id="WP_214360039.1">
    <property type="nucleotide sequence ID" value="NZ_JAEKFT010000003.1"/>
</dbReference>
<dbReference type="SMR" id="P0DV69"/>
<dbReference type="Proteomes" id="UP000694660">
    <property type="component" value="Unassembled WGS sequence"/>
</dbReference>
<dbReference type="GO" id="GO:0042597">
    <property type="term" value="C:periplasmic space"/>
    <property type="evidence" value="ECO:0007669"/>
    <property type="project" value="UniProtKB-SubCell"/>
</dbReference>
<dbReference type="GO" id="GO:0004130">
    <property type="term" value="F:cytochrome-c peroxidase activity"/>
    <property type="evidence" value="ECO:0007669"/>
    <property type="project" value="TreeGrafter"/>
</dbReference>
<dbReference type="GO" id="GO:0009055">
    <property type="term" value="F:electron transfer activity"/>
    <property type="evidence" value="ECO:0007669"/>
    <property type="project" value="InterPro"/>
</dbReference>
<dbReference type="GO" id="GO:0020037">
    <property type="term" value="F:heme binding"/>
    <property type="evidence" value="ECO:0007669"/>
    <property type="project" value="InterPro"/>
</dbReference>
<dbReference type="GO" id="GO:0046872">
    <property type="term" value="F:metal ion binding"/>
    <property type="evidence" value="ECO:0007669"/>
    <property type="project" value="UniProtKB-KW"/>
</dbReference>
<dbReference type="Gene3D" id="1.10.760.10">
    <property type="entry name" value="Cytochrome c-like domain"/>
    <property type="match status" value="2"/>
</dbReference>
<dbReference type="InterPro" id="IPR009056">
    <property type="entry name" value="Cyt_c-like_dom"/>
</dbReference>
<dbReference type="InterPro" id="IPR036909">
    <property type="entry name" value="Cyt_c-like_dom_sf"/>
</dbReference>
<dbReference type="InterPro" id="IPR051395">
    <property type="entry name" value="Cytochrome_c_Peroxidase/MauG"/>
</dbReference>
<dbReference type="InterPro" id="IPR004852">
    <property type="entry name" value="Di-haem_cyt_c_peroxidsae"/>
</dbReference>
<dbReference type="InterPro" id="IPR026259">
    <property type="entry name" value="MauG/Cytc_peroxidase"/>
</dbReference>
<dbReference type="PANTHER" id="PTHR30600:SF10">
    <property type="entry name" value="BLL6722 PROTEIN"/>
    <property type="match status" value="1"/>
</dbReference>
<dbReference type="PANTHER" id="PTHR30600">
    <property type="entry name" value="CYTOCHROME C PEROXIDASE-RELATED"/>
    <property type="match status" value="1"/>
</dbReference>
<dbReference type="Pfam" id="PF03150">
    <property type="entry name" value="CCP_MauG"/>
    <property type="match status" value="1"/>
</dbReference>
<dbReference type="PIRSF" id="PIRSF000294">
    <property type="entry name" value="Cytochrome-c_peroxidase"/>
    <property type="match status" value="1"/>
</dbReference>
<dbReference type="SUPFAM" id="SSF46626">
    <property type="entry name" value="Cytochrome c"/>
    <property type="match status" value="2"/>
</dbReference>
<dbReference type="PROSITE" id="PS51007">
    <property type="entry name" value="CYTC"/>
    <property type="match status" value="2"/>
</dbReference>
<reference key="1">
    <citation type="journal article" date="2022" name="ISME J.">
        <title>Genetic and phylogenetic analysis of dissimilatory iodate-reducing bacteria identifies potential niches across the world's oceans.</title>
        <authorList>
            <person name="Reyes-Umana V."/>
            <person name="Henning Z."/>
            <person name="Lee K."/>
            <person name="Barnum T.P."/>
            <person name="Coates J.D."/>
        </authorList>
    </citation>
    <scope>NUCLEOTIDE SEQUENCE [LARGE SCALE GENOMIC DNA]</scope>
    <scope>FUNCTION</scope>
    <scope>SUBUNIT</scope>
    <source>
        <strain>ATCC TSD-242 / DSM 113304 / IR12</strain>
    </source>
</reference>
<gene>
    <name evidence="6" type="primary">idrP2</name>
    <name evidence="9" type="ORF">I8J34_03790</name>
</gene>
<keyword id="KW-0349">Heme</keyword>
<keyword id="KW-0408">Iron</keyword>
<keyword id="KW-0479">Metal-binding</keyword>
<keyword id="KW-0560">Oxidoreductase</keyword>
<keyword id="KW-0574">Periplasm</keyword>
<keyword id="KW-1185">Reference proteome</keyword>
<keyword id="KW-0677">Repeat</keyword>
<keyword id="KW-0732">Signal</keyword>
<name>IDRP2_DENI1</name>
<accession>P0DV69</accession>
<accession>A0A944D9B8</accession>